<reference key="1">
    <citation type="journal article" date="1999" name="Nature">
        <title>Sequence and analysis of chromosome 2 of the plant Arabidopsis thaliana.</title>
        <authorList>
            <person name="Lin X."/>
            <person name="Kaul S."/>
            <person name="Rounsley S.D."/>
            <person name="Shea T.P."/>
            <person name="Benito M.-I."/>
            <person name="Town C.D."/>
            <person name="Fujii C.Y."/>
            <person name="Mason T.M."/>
            <person name="Bowman C.L."/>
            <person name="Barnstead M.E."/>
            <person name="Feldblyum T.V."/>
            <person name="Buell C.R."/>
            <person name="Ketchum K.A."/>
            <person name="Lee J.J."/>
            <person name="Ronning C.M."/>
            <person name="Koo H.L."/>
            <person name="Moffat K.S."/>
            <person name="Cronin L.A."/>
            <person name="Shen M."/>
            <person name="Pai G."/>
            <person name="Van Aken S."/>
            <person name="Umayam L."/>
            <person name="Tallon L.J."/>
            <person name="Gill J.E."/>
            <person name="Adams M.D."/>
            <person name="Carrera A.J."/>
            <person name="Creasy T.H."/>
            <person name="Goodman H.M."/>
            <person name="Somerville C.R."/>
            <person name="Copenhaver G.P."/>
            <person name="Preuss D."/>
            <person name="Nierman W.C."/>
            <person name="White O."/>
            <person name="Eisen J.A."/>
            <person name="Salzberg S.L."/>
            <person name="Fraser C.M."/>
            <person name="Venter J.C."/>
        </authorList>
    </citation>
    <scope>NUCLEOTIDE SEQUENCE [LARGE SCALE GENOMIC DNA]</scope>
    <source>
        <strain>cv. Columbia</strain>
    </source>
</reference>
<reference key="2">
    <citation type="journal article" date="2017" name="Plant J.">
        <title>Araport11: a complete reannotation of the Arabidopsis thaliana reference genome.</title>
        <authorList>
            <person name="Cheng C.Y."/>
            <person name="Krishnakumar V."/>
            <person name="Chan A.P."/>
            <person name="Thibaud-Nissen F."/>
            <person name="Schobel S."/>
            <person name="Town C.D."/>
        </authorList>
    </citation>
    <scope>GENOME REANNOTATION</scope>
    <source>
        <strain>cv. Columbia</strain>
    </source>
</reference>
<reference key="3">
    <citation type="journal article" date="2005" name="Plant Physiol.">
        <title>Genome organization of more than 300 defensin-like genes in Arabidopsis.</title>
        <authorList>
            <person name="Silverstein K.A.T."/>
            <person name="Graham M.A."/>
            <person name="Paape T.D."/>
            <person name="VandenBosch K.A."/>
        </authorList>
    </citation>
    <scope>GENE FAMILY</scope>
</reference>
<proteinExistence type="inferred from homology"/>
<feature type="signal peptide" evidence="2">
    <location>
        <begin position="1"/>
        <end position="28"/>
    </location>
</feature>
<feature type="chain" id="PRO_0000379689" description="Putative defensin-like protein 191">
    <location>
        <begin position="29"/>
        <end position="82"/>
    </location>
</feature>
<feature type="disulfide bond" evidence="1">
    <location>
        <begin position="33"/>
        <end position="79"/>
    </location>
</feature>
<feature type="disulfide bond" evidence="1">
    <location>
        <begin position="46"/>
        <end position="65"/>
    </location>
</feature>
<feature type="disulfide bond" evidence="1">
    <location>
        <begin position="51"/>
        <end position="74"/>
    </location>
</feature>
<feature type="disulfide bond" evidence="1">
    <location>
        <begin position="55"/>
        <end position="76"/>
    </location>
</feature>
<accession>Q2V466</accession>
<dbReference type="EMBL" id="AC004786">
    <property type="status" value="NOT_ANNOTATED_CDS"/>
    <property type="molecule type" value="Genomic_DNA"/>
</dbReference>
<dbReference type="EMBL" id="CP002685">
    <property type="status" value="NOT_ANNOTATED_CDS"/>
    <property type="molecule type" value="Genomic_DNA"/>
</dbReference>
<dbReference type="SMR" id="Q2V466"/>
<dbReference type="PaxDb" id="3702-AT2G22941.1"/>
<dbReference type="ProteomicsDB" id="224276"/>
<dbReference type="Araport" id="AT2G22941"/>
<dbReference type="TAIR" id="AT2G22941"/>
<dbReference type="HOGENOM" id="CLU_191725_0_0_1"/>
<dbReference type="InParanoid" id="Q2V466"/>
<dbReference type="PhylomeDB" id="Q2V466"/>
<dbReference type="PRO" id="PR:Q2V466"/>
<dbReference type="Proteomes" id="UP000006548">
    <property type="component" value="Chromosome 2"/>
</dbReference>
<dbReference type="ExpressionAtlas" id="Q2V466">
    <property type="expression patterns" value="baseline"/>
</dbReference>
<dbReference type="GO" id="GO:0005576">
    <property type="term" value="C:extracellular region"/>
    <property type="evidence" value="ECO:0007669"/>
    <property type="project" value="UniProtKB-SubCell"/>
</dbReference>
<dbReference type="GO" id="GO:0006952">
    <property type="term" value="P:defense response"/>
    <property type="evidence" value="ECO:0000318"/>
    <property type="project" value="GO_Central"/>
</dbReference>
<dbReference type="GO" id="GO:0050832">
    <property type="term" value="P:defense response to fungus"/>
    <property type="evidence" value="ECO:0007669"/>
    <property type="project" value="UniProtKB-KW"/>
</dbReference>
<dbReference type="GO" id="GO:0031640">
    <property type="term" value="P:killing of cells of another organism"/>
    <property type="evidence" value="ECO:0007669"/>
    <property type="project" value="UniProtKB-KW"/>
</dbReference>
<sequence>MAKSVNATGFITYMVIFLILTGISRVKAKKPPCLEGRTAYVSPGPCSNSLCTQDCRPAGYHTGKCKVEWSTPICKCYGCRKV</sequence>
<gene>
    <name type="ordered locus">At2g22941</name>
    <name type="ORF">T20K9</name>
</gene>
<comment type="subcellular location">
    <subcellularLocation>
        <location evidence="1">Secreted</location>
    </subcellularLocation>
</comment>
<comment type="similarity">
    <text evidence="3">Belongs to the DEFL family.</text>
</comment>
<organism>
    <name type="scientific">Arabidopsis thaliana</name>
    <name type="common">Mouse-ear cress</name>
    <dbReference type="NCBI Taxonomy" id="3702"/>
    <lineage>
        <taxon>Eukaryota</taxon>
        <taxon>Viridiplantae</taxon>
        <taxon>Streptophyta</taxon>
        <taxon>Embryophyta</taxon>
        <taxon>Tracheophyta</taxon>
        <taxon>Spermatophyta</taxon>
        <taxon>Magnoliopsida</taxon>
        <taxon>eudicotyledons</taxon>
        <taxon>Gunneridae</taxon>
        <taxon>Pentapetalae</taxon>
        <taxon>rosids</taxon>
        <taxon>malvids</taxon>
        <taxon>Brassicales</taxon>
        <taxon>Brassicaceae</taxon>
        <taxon>Camelineae</taxon>
        <taxon>Arabidopsis</taxon>
    </lineage>
</organism>
<name>DF191_ARATH</name>
<keyword id="KW-0929">Antimicrobial</keyword>
<keyword id="KW-1015">Disulfide bond</keyword>
<keyword id="KW-0295">Fungicide</keyword>
<keyword id="KW-0611">Plant defense</keyword>
<keyword id="KW-1185">Reference proteome</keyword>
<keyword id="KW-0964">Secreted</keyword>
<keyword id="KW-0732">Signal</keyword>
<protein>
    <recommendedName>
        <fullName>Putative defensin-like protein 191</fullName>
    </recommendedName>
</protein>
<evidence type="ECO:0000250" key="1"/>
<evidence type="ECO:0000255" key="2"/>
<evidence type="ECO:0000305" key="3"/>